<accession>Q66HE5</accession>
<gene>
    <name evidence="11" type="primary">Nuak2</name>
</gene>
<reference evidence="10" key="1">
    <citation type="journal article" date="2001" name="Biochem. J.">
        <title>Identification and characterization of a novel sucrose-non-fermenting protein kinase/AMP-activated protein kinase-related protein kinase, SNARK.</title>
        <authorList>
            <person name="Lefebvre D.L."/>
            <person name="Bai Y."/>
            <person name="Shahmolky N."/>
            <person name="Sharma M."/>
            <person name="Poon R."/>
            <person name="Drucker D.J."/>
            <person name="Rosen C.F."/>
        </authorList>
    </citation>
    <scope>NUCLEOTIDE SEQUENCE [MRNA] (ISOFORM 1)</scope>
    <scope>FUNCTION</scope>
    <scope>ALTERNATIVE SPLICING</scope>
    <scope>AUTOPHOSPHORYLATION</scope>
    <scope>TISSUE SPECIFICITY</scope>
    <source>
        <tissue evidence="8">Keratinocyte</tissue>
        <tissue evidence="8">Kidney</tissue>
        <tissue evidence="8">Lung</tissue>
    </source>
</reference>
<reference key="2">
    <citation type="journal article" date="2004" name="Genome Res.">
        <title>The status, quality, and expansion of the NIH full-length cDNA project: the Mammalian Gene Collection (MGC).</title>
        <authorList>
            <consortium name="The MGC Project Team"/>
        </authorList>
    </citation>
    <scope>NUCLEOTIDE SEQUENCE [LARGE SCALE MRNA] (ISOFORM 1)</scope>
    <source>
        <tissue>Kidney</tissue>
    </source>
</reference>
<reference evidence="10" key="3">
    <citation type="journal article" date="2005" name="Biochim. Biophys. Acta">
        <title>Regulation of SNARK activity in response to cellular stresses.</title>
        <authorList>
            <person name="Lefebvre D.L."/>
            <person name="Rosen C.F."/>
        </authorList>
    </citation>
    <scope>FUNCTION</scope>
    <scope>ACTIVITY REGULATION</scope>
    <scope>TISSUE SPECIFICITY</scope>
</reference>
<sequence length="630" mass="69953">MESVALHRRGNLAPSASALATESARPLADRLIKSPKPLMKKQAVKRHHHKHNLRHRYEFLETLGKGTYGKVKKARESSGRLVAIKSIRKDKIKDEQDLLHIRREIEIMSSLNHPHIIAIHEVFENSSKIVIVMEYASRGDLYDYISERPRLNERDARHFFRQIVSALHYCHQNGIVHRDLKLENILLDASGNIKIADFGLSNLYHKGKFLQTFCGSPLYASPEIVNGKPYVGPEVDSWSLGVLLYILVHGTMPFDGQDHKTLVKQISSGAYREPCKPSDACGLIRWLLMVNPIRRATLEDVASHWWVNWGYSTRIGEQEALREGGHPSGDSGRASMADWLRRSSRPLLENGAKVCSFFKQHVPGGGSTGPGLERQHSLKKSRKENDMAQTLQNDPAEDTSSRPGKNSLKLPKGILKKKASPSSGEVQEGPQELRPVSNTPGQPVPAIPLLPRKGILKKSRQRESGYYSSPEPSESGELLDAGDVFVSGDPMEQKSPQASGRLHRKGILKLNGKFSRTALEGTAPSTFGSLDQLASPHPTARASRPSGAVSEDSILSSESFDQLDLPERLPETPLRGCVSVDNLRRLEQPPSEGLKRWWQESLGDSCFSLTDCQEVTAAYRQALGICSKLS</sequence>
<keyword id="KW-0007">Acetylation</keyword>
<keyword id="KW-0025">Alternative splicing</keyword>
<keyword id="KW-0053">Apoptosis</keyword>
<keyword id="KW-0067">ATP-binding</keyword>
<keyword id="KW-0418">Kinase</keyword>
<keyword id="KW-0460">Magnesium</keyword>
<keyword id="KW-0479">Metal-binding</keyword>
<keyword id="KW-0547">Nucleotide-binding</keyword>
<keyword id="KW-0597">Phosphoprotein</keyword>
<keyword id="KW-1185">Reference proteome</keyword>
<keyword id="KW-0723">Serine/threonine-protein kinase</keyword>
<keyword id="KW-0808">Transferase</keyword>
<organism>
    <name type="scientific">Rattus norvegicus</name>
    <name type="common">Rat</name>
    <dbReference type="NCBI Taxonomy" id="10116"/>
    <lineage>
        <taxon>Eukaryota</taxon>
        <taxon>Metazoa</taxon>
        <taxon>Chordata</taxon>
        <taxon>Craniata</taxon>
        <taxon>Vertebrata</taxon>
        <taxon>Euteleostomi</taxon>
        <taxon>Mammalia</taxon>
        <taxon>Eutheria</taxon>
        <taxon>Euarchontoglires</taxon>
        <taxon>Glires</taxon>
        <taxon>Rodentia</taxon>
        <taxon>Myomorpha</taxon>
        <taxon>Muroidea</taxon>
        <taxon>Muridae</taxon>
        <taxon>Murinae</taxon>
        <taxon>Rattus</taxon>
    </lineage>
</organism>
<proteinExistence type="evidence at protein level"/>
<comment type="function">
    <text evidence="4">Stress-activated kinase involved in tolerance to glucose starvation. Induces cell-cell detachment by increasing F-actin conversion to G-actin. Expression is induced by CD95 or TNF-alpha, via NF-kappa-B. Protects cells from CD95-mediated apoptosis and is required for the increased motility and invasiveness of CD95-activated tumor cells. Phosphorylates LATS1 and LATS2. Plays a key role in neural tube closure during embryonic development through LATS2 phosphorylation and regulation of the nuclear localization of YAP1 a critical downstream regulatory target in the Hippo signaling pathway.</text>
</comment>
<comment type="catalytic activity">
    <reaction evidence="8 9">
        <text>L-seryl-[protein] + ATP = O-phospho-L-seryl-[protein] + ADP + H(+)</text>
        <dbReference type="Rhea" id="RHEA:17989"/>
        <dbReference type="Rhea" id="RHEA-COMP:9863"/>
        <dbReference type="Rhea" id="RHEA-COMP:11604"/>
        <dbReference type="ChEBI" id="CHEBI:15378"/>
        <dbReference type="ChEBI" id="CHEBI:29999"/>
        <dbReference type="ChEBI" id="CHEBI:30616"/>
        <dbReference type="ChEBI" id="CHEBI:83421"/>
        <dbReference type="ChEBI" id="CHEBI:456216"/>
        <dbReference type="EC" id="2.7.11.1"/>
    </reaction>
</comment>
<comment type="catalytic activity">
    <reaction evidence="8 9">
        <text>L-threonyl-[protein] + ATP = O-phospho-L-threonyl-[protein] + ADP + H(+)</text>
        <dbReference type="Rhea" id="RHEA:46608"/>
        <dbReference type="Rhea" id="RHEA-COMP:11060"/>
        <dbReference type="Rhea" id="RHEA-COMP:11605"/>
        <dbReference type="ChEBI" id="CHEBI:15378"/>
        <dbReference type="ChEBI" id="CHEBI:30013"/>
        <dbReference type="ChEBI" id="CHEBI:30616"/>
        <dbReference type="ChEBI" id="CHEBI:61977"/>
        <dbReference type="ChEBI" id="CHEBI:456216"/>
        <dbReference type="EC" id="2.7.11.1"/>
    </reaction>
</comment>
<comment type="cofactor">
    <cofactor evidence="8">
        <name>Mg(2+)</name>
        <dbReference type="ChEBI" id="CHEBI:18420"/>
    </cofactor>
</comment>
<comment type="activity regulation">
    <text evidence="1 8 9">Activated by phosphorylation on Thr-212 by STK11 in complex with STE20-related adapter-alpha (STRAD alpha) pseudo kinase and CAB39.</text>
</comment>
<comment type="alternative products">
    <event type="alternative splicing"/>
    <isoform>
        <id>Q66HE5-1</id>
        <name>1</name>
        <sequence type="displayed"/>
    </isoform>
    <text evidence="8">Additional isoforms seem to exist. At least one kinase-inactive isoform is believed to be expressed.</text>
</comment>
<comment type="tissue specificity">
    <text evidence="8 9">Expressed in liver, skin, testis, uterus, ovary, adrenal gland and brain (at protein level). Expressed in kidney, heart, skin, spleen, lung, uterus, liver and the exocrine and endocrine compartments of the human pancreas. A kinase-inactive isoform also appears to be expressed in the skin, spleen, lung, uterus, liver and testis.</text>
</comment>
<comment type="PTM">
    <text evidence="4">Phosphorylated at Thr-212 by STK11/LKB1 in complex with STE20-related adapter-alpha (STRADA) pseudo kinase and CAB39. Autophosphorylation is also possible at Thr-212.</text>
</comment>
<comment type="similarity">
    <text evidence="10">Belongs to the protein kinase superfamily. CAMK Ser/Thr protein kinase family. SNF1 subfamily.</text>
</comment>
<feature type="chain" id="PRO_0000247759" description="NUAK family SNF1-like kinase 2">
    <location>
        <begin position="1"/>
        <end position="630"/>
    </location>
</feature>
<feature type="domain" description="Protein kinase" evidence="5">
    <location>
        <begin position="57"/>
        <end position="307"/>
    </location>
</feature>
<feature type="region of interest" description="Disordered" evidence="7">
    <location>
        <begin position="361"/>
        <end position="504"/>
    </location>
</feature>
<feature type="region of interest" description="Disordered" evidence="7">
    <location>
        <begin position="521"/>
        <end position="566"/>
    </location>
</feature>
<feature type="compositionally biased region" description="Low complexity" evidence="7">
    <location>
        <begin position="464"/>
        <end position="476"/>
    </location>
</feature>
<feature type="active site" description="Proton acceptor" evidence="2 5 6">
    <location>
        <position position="179"/>
    </location>
</feature>
<feature type="binding site" evidence="4 5">
    <location>
        <begin position="63"/>
        <end position="71"/>
    </location>
    <ligand>
        <name>ATP</name>
        <dbReference type="ChEBI" id="CHEBI:30616"/>
    </ligand>
</feature>
<feature type="binding site" evidence="4 5">
    <location>
        <position position="85"/>
    </location>
    <ligand>
        <name>ATP</name>
        <dbReference type="ChEBI" id="CHEBI:30616"/>
    </ligand>
</feature>
<feature type="modified residue" description="N-acetylmethionine" evidence="4">
    <location>
        <position position="1"/>
    </location>
</feature>
<feature type="modified residue" description="Phosphothreonine" evidence="4">
    <location>
        <position position="212"/>
    </location>
</feature>
<feature type="modified residue" description="Phosphoserine" evidence="4">
    <location>
        <position position="529"/>
    </location>
</feature>
<feature type="modified residue" description="Phosphoserine" evidence="4">
    <location>
        <position position="550"/>
    </location>
</feature>
<feature type="modified residue" description="Phosphoserine" evidence="4">
    <location>
        <position position="553"/>
    </location>
</feature>
<feature type="modified residue" description="Phosphoserine" evidence="3">
    <location>
        <position position="579"/>
    </location>
</feature>
<protein>
    <recommendedName>
        <fullName>NUAK family SNF1-like kinase 2</fullName>
        <ecNumber>2.7.11.1</ecNumber>
    </recommendedName>
    <alternativeName>
        <fullName>SNF1/AMP kinase-related kinase</fullName>
        <shortName>SNARK</shortName>
    </alternativeName>
</protein>
<evidence type="ECO:0000250" key="1"/>
<evidence type="ECO:0000250" key="2">
    <source>
        <dbReference type="UniProtKB" id="O60285"/>
    </source>
</evidence>
<evidence type="ECO:0000250" key="3">
    <source>
        <dbReference type="UniProtKB" id="Q8BZN4"/>
    </source>
</evidence>
<evidence type="ECO:0000250" key="4">
    <source>
        <dbReference type="UniProtKB" id="Q9H093"/>
    </source>
</evidence>
<evidence type="ECO:0000255" key="5">
    <source>
        <dbReference type="PROSITE-ProRule" id="PRU00159"/>
    </source>
</evidence>
<evidence type="ECO:0000255" key="6">
    <source>
        <dbReference type="PROSITE-ProRule" id="PRU10027"/>
    </source>
</evidence>
<evidence type="ECO:0000256" key="7">
    <source>
        <dbReference type="SAM" id="MobiDB-lite"/>
    </source>
</evidence>
<evidence type="ECO:0000269" key="8">
    <source>
    </source>
</evidence>
<evidence type="ECO:0000269" key="9">
    <source>
    </source>
</evidence>
<evidence type="ECO:0000305" key="10"/>
<evidence type="ECO:0000312" key="11">
    <source>
        <dbReference type="EMBL" id="AAH81899.1"/>
    </source>
</evidence>
<name>NUAK2_RAT</name>
<dbReference type="EC" id="2.7.11.1"/>
<dbReference type="EMBL" id="BC081899">
    <property type="protein sequence ID" value="AAH81899.1"/>
    <property type="molecule type" value="mRNA"/>
</dbReference>
<dbReference type="RefSeq" id="NP_001007618.1">
    <molecule id="Q66HE5-1"/>
    <property type="nucleotide sequence ID" value="NM_001007617.1"/>
</dbReference>
<dbReference type="SMR" id="Q66HE5"/>
<dbReference type="FunCoup" id="Q66HE5">
    <property type="interactions" value="418"/>
</dbReference>
<dbReference type="STRING" id="10116.ENSRNOP00000000039"/>
<dbReference type="PhosphoSitePlus" id="Q66HE5"/>
<dbReference type="PaxDb" id="10116-ENSRNOP00000000039"/>
<dbReference type="Ensembl" id="ENSRNOT00000000039.4">
    <molecule id="Q66HE5-1"/>
    <property type="protein sequence ID" value="ENSRNOP00000000039.2"/>
    <property type="gene ID" value="ENSRNOG00000000034.7"/>
</dbReference>
<dbReference type="GeneID" id="289419"/>
<dbReference type="KEGG" id="rno:289419"/>
<dbReference type="UCSC" id="RGD:1359167">
    <molecule id="Q66HE5-1"/>
    <property type="organism name" value="rat"/>
</dbReference>
<dbReference type="AGR" id="RGD:1359167"/>
<dbReference type="CTD" id="81788"/>
<dbReference type="RGD" id="1359167">
    <property type="gene designation" value="Nuak2"/>
</dbReference>
<dbReference type="eggNOG" id="KOG0611">
    <property type="taxonomic scope" value="Eukaryota"/>
</dbReference>
<dbReference type="GeneTree" id="ENSGT00940000158422"/>
<dbReference type="HOGENOM" id="CLU_000288_63_42_1"/>
<dbReference type="InParanoid" id="Q66HE5"/>
<dbReference type="OrthoDB" id="57834at9989"/>
<dbReference type="PRO" id="PR:Q66HE5"/>
<dbReference type="Proteomes" id="UP000002494">
    <property type="component" value="Chromosome 13"/>
</dbReference>
<dbReference type="Bgee" id="ENSRNOG00000000034">
    <property type="expression patterns" value="Expressed in kidney and 19 other cell types or tissues"/>
</dbReference>
<dbReference type="GO" id="GO:0005524">
    <property type="term" value="F:ATP binding"/>
    <property type="evidence" value="ECO:0000314"/>
    <property type="project" value="UniProtKB"/>
</dbReference>
<dbReference type="GO" id="GO:0000287">
    <property type="term" value="F:magnesium ion binding"/>
    <property type="evidence" value="ECO:0000314"/>
    <property type="project" value="UniProtKB"/>
</dbReference>
<dbReference type="GO" id="GO:0106310">
    <property type="term" value="F:protein serine kinase activity"/>
    <property type="evidence" value="ECO:0007669"/>
    <property type="project" value="RHEA"/>
</dbReference>
<dbReference type="GO" id="GO:0004674">
    <property type="term" value="F:protein serine/threonine kinase activity"/>
    <property type="evidence" value="ECO:0000314"/>
    <property type="project" value="UniProtKB"/>
</dbReference>
<dbReference type="GO" id="GO:0030036">
    <property type="term" value="P:actin cytoskeleton organization"/>
    <property type="evidence" value="ECO:0000250"/>
    <property type="project" value="UniProtKB"/>
</dbReference>
<dbReference type="GO" id="GO:0006915">
    <property type="term" value="P:apoptotic process"/>
    <property type="evidence" value="ECO:0007669"/>
    <property type="project" value="UniProtKB-KW"/>
</dbReference>
<dbReference type="GO" id="GO:0042149">
    <property type="term" value="P:cellular response to glucose starvation"/>
    <property type="evidence" value="ECO:0000314"/>
    <property type="project" value="UniProtKB"/>
</dbReference>
<dbReference type="GO" id="GO:0043066">
    <property type="term" value="P:negative regulation of apoptotic process"/>
    <property type="evidence" value="ECO:0000250"/>
    <property type="project" value="UniProtKB"/>
</dbReference>
<dbReference type="GO" id="GO:0034504">
    <property type="term" value="P:protein localization to nucleus"/>
    <property type="evidence" value="ECO:0000250"/>
    <property type="project" value="UniProtKB"/>
</dbReference>
<dbReference type="GO" id="GO:0006468">
    <property type="term" value="P:protein phosphorylation"/>
    <property type="evidence" value="ECO:0000314"/>
    <property type="project" value="UniProtKB"/>
</dbReference>
<dbReference type="GO" id="GO:0035330">
    <property type="term" value="P:regulation of hippo signaling"/>
    <property type="evidence" value="ECO:0000250"/>
    <property type="project" value="UniProtKB"/>
</dbReference>
<dbReference type="FunFam" id="3.30.200.20:FF:000042">
    <property type="entry name" value="Aurora kinase A"/>
    <property type="match status" value="1"/>
</dbReference>
<dbReference type="FunFam" id="1.10.510.10:FF:000226">
    <property type="entry name" value="NUAK family SNF1-like kinase 1"/>
    <property type="match status" value="1"/>
</dbReference>
<dbReference type="Gene3D" id="1.10.510.10">
    <property type="entry name" value="Transferase(Phosphotransferase) domain 1"/>
    <property type="match status" value="1"/>
</dbReference>
<dbReference type="InterPro" id="IPR011009">
    <property type="entry name" value="Kinase-like_dom_sf"/>
</dbReference>
<dbReference type="InterPro" id="IPR000719">
    <property type="entry name" value="Prot_kinase_dom"/>
</dbReference>
<dbReference type="InterPro" id="IPR017441">
    <property type="entry name" value="Protein_kinase_ATP_BS"/>
</dbReference>
<dbReference type="InterPro" id="IPR008271">
    <property type="entry name" value="Ser/Thr_kinase_AS"/>
</dbReference>
<dbReference type="PANTHER" id="PTHR24346">
    <property type="entry name" value="MAP/MICROTUBULE AFFINITY-REGULATING KINASE"/>
    <property type="match status" value="1"/>
</dbReference>
<dbReference type="PANTHER" id="PTHR24346:SF93">
    <property type="entry name" value="NUAK FAMILY SNF1-LIKE KINASE 1"/>
    <property type="match status" value="1"/>
</dbReference>
<dbReference type="Pfam" id="PF00069">
    <property type="entry name" value="Pkinase"/>
    <property type="match status" value="1"/>
</dbReference>
<dbReference type="SMART" id="SM00220">
    <property type="entry name" value="S_TKc"/>
    <property type="match status" value="1"/>
</dbReference>
<dbReference type="SUPFAM" id="SSF56112">
    <property type="entry name" value="Protein kinase-like (PK-like)"/>
    <property type="match status" value="1"/>
</dbReference>
<dbReference type="PROSITE" id="PS00107">
    <property type="entry name" value="PROTEIN_KINASE_ATP"/>
    <property type="match status" value="1"/>
</dbReference>
<dbReference type="PROSITE" id="PS50011">
    <property type="entry name" value="PROTEIN_KINASE_DOM"/>
    <property type="match status" value="1"/>
</dbReference>
<dbReference type="PROSITE" id="PS00108">
    <property type="entry name" value="PROTEIN_KINASE_ST"/>
    <property type="match status" value="1"/>
</dbReference>